<proteinExistence type="inferred from homology"/>
<keyword id="KW-0687">Ribonucleoprotein</keyword>
<keyword id="KW-0689">Ribosomal protein</keyword>
<sequence length="129" mass="14532">MRHRKSGRQLNRNSSHRQAMFRNMAGSLVRHEIIKTTLPKAKELRRVVEPLITLAKTDNVANRRLAFARTRDNEIVAKLFNELGPRFASRAGGYTRILKCGFRAGDNAPMAYIELVDRAASQAEVVAAE</sequence>
<gene>
    <name evidence="1" type="primary">rplQ</name>
    <name type="ordered locus">YpsIP31758_3889</name>
</gene>
<name>RL17_YERP3</name>
<comment type="subunit">
    <text evidence="1">Part of the 50S ribosomal subunit. Contacts protein L32.</text>
</comment>
<comment type="similarity">
    <text evidence="1">Belongs to the bacterial ribosomal protein bL17 family.</text>
</comment>
<dbReference type="EMBL" id="CP000720">
    <property type="protein sequence ID" value="ABS47316.1"/>
    <property type="molecule type" value="Genomic_DNA"/>
</dbReference>
<dbReference type="RefSeq" id="WP_002209014.1">
    <property type="nucleotide sequence ID" value="NC_009708.1"/>
</dbReference>
<dbReference type="SMR" id="A7FNK9"/>
<dbReference type="GeneID" id="57974369"/>
<dbReference type="KEGG" id="ypi:YpsIP31758_3889"/>
<dbReference type="HOGENOM" id="CLU_074407_2_0_6"/>
<dbReference type="Proteomes" id="UP000002412">
    <property type="component" value="Chromosome"/>
</dbReference>
<dbReference type="GO" id="GO:0022625">
    <property type="term" value="C:cytosolic large ribosomal subunit"/>
    <property type="evidence" value="ECO:0007669"/>
    <property type="project" value="TreeGrafter"/>
</dbReference>
<dbReference type="GO" id="GO:0003735">
    <property type="term" value="F:structural constituent of ribosome"/>
    <property type="evidence" value="ECO:0007669"/>
    <property type="project" value="InterPro"/>
</dbReference>
<dbReference type="GO" id="GO:0006412">
    <property type="term" value="P:translation"/>
    <property type="evidence" value="ECO:0007669"/>
    <property type="project" value="UniProtKB-UniRule"/>
</dbReference>
<dbReference type="FunFam" id="3.90.1030.10:FF:000001">
    <property type="entry name" value="50S ribosomal protein L17"/>
    <property type="match status" value="1"/>
</dbReference>
<dbReference type="Gene3D" id="3.90.1030.10">
    <property type="entry name" value="Ribosomal protein L17"/>
    <property type="match status" value="1"/>
</dbReference>
<dbReference type="HAMAP" id="MF_01368">
    <property type="entry name" value="Ribosomal_bL17"/>
    <property type="match status" value="1"/>
</dbReference>
<dbReference type="InterPro" id="IPR000456">
    <property type="entry name" value="Ribosomal_bL17"/>
</dbReference>
<dbReference type="InterPro" id="IPR047859">
    <property type="entry name" value="Ribosomal_bL17_CS"/>
</dbReference>
<dbReference type="InterPro" id="IPR036373">
    <property type="entry name" value="Ribosomal_bL17_sf"/>
</dbReference>
<dbReference type="NCBIfam" id="TIGR00059">
    <property type="entry name" value="L17"/>
    <property type="match status" value="1"/>
</dbReference>
<dbReference type="PANTHER" id="PTHR14413:SF16">
    <property type="entry name" value="LARGE RIBOSOMAL SUBUNIT PROTEIN BL17M"/>
    <property type="match status" value="1"/>
</dbReference>
<dbReference type="PANTHER" id="PTHR14413">
    <property type="entry name" value="RIBOSOMAL PROTEIN L17"/>
    <property type="match status" value="1"/>
</dbReference>
<dbReference type="Pfam" id="PF01196">
    <property type="entry name" value="Ribosomal_L17"/>
    <property type="match status" value="1"/>
</dbReference>
<dbReference type="SUPFAM" id="SSF64263">
    <property type="entry name" value="Prokaryotic ribosomal protein L17"/>
    <property type="match status" value="1"/>
</dbReference>
<dbReference type="PROSITE" id="PS01167">
    <property type="entry name" value="RIBOSOMAL_L17"/>
    <property type="match status" value="1"/>
</dbReference>
<accession>A7FNK9</accession>
<evidence type="ECO:0000255" key="1">
    <source>
        <dbReference type="HAMAP-Rule" id="MF_01368"/>
    </source>
</evidence>
<evidence type="ECO:0000305" key="2"/>
<organism>
    <name type="scientific">Yersinia pseudotuberculosis serotype O:1b (strain IP 31758)</name>
    <dbReference type="NCBI Taxonomy" id="349747"/>
    <lineage>
        <taxon>Bacteria</taxon>
        <taxon>Pseudomonadati</taxon>
        <taxon>Pseudomonadota</taxon>
        <taxon>Gammaproteobacteria</taxon>
        <taxon>Enterobacterales</taxon>
        <taxon>Yersiniaceae</taxon>
        <taxon>Yersinia</taxon>
    </lineage>
</organism>
<reference key="1">
    <citation type="journal article" date="2007" name="PLoS Genet.">
        <title>The complete genome sequence of Yersinia pseudotuberculosis IP31758, the causative agent of Far East scarlet-like fever.</title>
        <authorList>
            <person name="Eppinger M."/>
            <person name="Rosovitz M.J."/>
            <person name="Fricke W.F."/>
            <person name="Rasko D.A."/>
            <person name="Kokorina G."/>
            <person name="Fayolle C."/>
            <person name="Lindler L.E."/>
            <person name="Carniel E."/>
            <person name="Ravel J."/>
        </authorList>
    </citation>
    <scope>NUCLEOTIDE SEQUENCE [LARGE SCALE GENOMIC DNA]</scope>
    <source>
        <strain>IP 31758</strain>
    </source>
</reference>
<protein>
    <recommendedName>
        <fullName evidence="1">Large ribosomal subunit protein bL17</fullName>
    </recommendedName>
    <alternativeName>
        <fullName evidence="2">50S ribosomal protein L17</fullName>
    </alternativeName>
</protein>
<feature type="chain" id="PRO_1000068031" description="Large ribosomal subunit protein bL17">
    <location>
        <begin position="1"/>
        <end position="129"/>
    </location>
</feature>